<dbReference type="EMBL" id="AB020742">
    <property type="protein sequence ID" value="BAB10948.1"/>
    <property type="molecule type" value="Genomic_DNA"/>
</dbReference>
<dbReference type="EMBL" id="CP002688">
    <property type="protein sequence ID" value="AED98306.1"/>
    <property type="molecule type" value="Genomic_DNA"/>
</dbReference>
<dbReference type="EMBL" id="AY072313">
    <property type="protein sequence ID" value="AAL61920.1"/>
    <property type="molecule type" value="mRNA"/>
</dbReference>
<dbReference type="EMBL" id="AY114554">
    <property type="protein sequence ID" value="AAM47873.1"/>
    <property type="molecule type" value="mRNA"/>
</dbReference>
<dbReference type="RefSeq" id="NP_201515.1">
    <property type="nucleotide sequence ID" value="NM_126114.4"/>
</dbReference>
<dbReference type="SMR" id="Q9FH99"/>
<dbReference type="BioGRID" id="22091">
    <property type="interactions" value="6"/>
</dbReference>
<dbReference type="FunCoup" id="Q9FH99">
    <property type="interactions" value="108"/>
</dbReference>
<dbReference type="IntAct" id="Q9FH99">
    <property type="interactions" value="2"/>
</dbReference>
<dbReference type="STRING" id="3702.Q9FH99"/>
<dbReference type="PaxDb" id="3702-AT5G67140.1"/>
<dbReference type="EnsemblPlants" id="AT5G67140.1">
    <property type="protein sequence ID" value="AT5G67140.1"/>
    <property type="gene ID" value="AT5G67140"/>
</dbReference>
<dbReference type="GeneID" id="836849"/>
<dbReference type="Gramene" id="AT5G67140.1">
    <property type="protein sequence ID" value="AT5G67140.1"/>
    <property type="gene ID" value="AT5G67140"/>
</dbReference>
<dbReference type="KEGG" id="ath:AT5G67140"/>
<dbReference type="Araport" id="AT5G67140"/>
<dbReference type="TAIR" id="AT5G67140"/>
<dbReference type="eggNOG" id="KOG1947">
    <property type="taxonomic scope" value="Eukaryota"/>
</dbReference>
<dbReference type="HOGENOM" id="CLU_073955_1_0_1"/>
<dbReference type="InParanoid" id="Q9FH99"/>
<dbReference type="OMA" id="FSGWKVD"/>
<dbReference type="OrthoDB" id="550575at2759"/>
<dbReference type="PhylomeDB" id="Q9FH99"/>
<dbReference type="PRO" id="PR:Q9FH99"/>
<dbReference type="Proteomes" id="UP000006548">
    <property type="component" value="Chromosome 5"/>
</dbReference>
<dbReference type="ExpressionAtlas" id="Q9FH99">
    <property type="expression patterns" value="baseline and differential"/>
</dbReference>
<dbReference type="FunFam" id="1.20.1280.50:FF:000092">
    <property type="entry name" value="F-box protein At5g67140"/>
    <property type="match status" value="1"/>
</dbReference>
<dbReference type="FunFam" id="3.80.10.10:FF:000925">
    <property type="entry name" value="F-box protein At5g67140"/>
    <property type="match status" value="1"/>
</dbReference>
<dbReference type="Gene3D" id="1.20.1280.50">
    <property type="match status" value="1"/>
</dbReference>
<dbReference type="Gene3D" id="3.80.10.10">
    <property type="entry name" value="Ribonuclease Inhibitor"/>
    <property type="match status" value="1"/>
</dbReference>
<dbReference type="InterPro" id="IPR036047">
    <property type="entry name" value="F-box-like_dom_sf"/>
</dbReference>
<dbReference type="InterPro" id="IPR001810">
    <property type="entry name" value="F-box_dom"/>
</dbReference>
<dbReference type="InterPro" id="IPR001611">
    <property type="entry name" value="Leu-rich_rpt"/>
</dbReference>
<dbReference type="InterPro" id="IPR006553">
    <property type="entry name" value="Leu-rich_rpt_Cys-con_subtyp"/>
</dbReference>
<dbReference type="InterPro" id="IPR032675">
    <property type="entry name" value="LRR_dom_sf"/>
</dbReference>
<dbReference type="PANTHER" id="PTHR13318">
    <property type="entry name" value="PARTNER OF PAIRED, ISOFORM B-RELATED"/>
    <property type="match status" value="1"/>
</dbReference>
<dbReference type="Pfam" id="PF12937">
    <property type="entry name" value="F-box-like"/>
    <property type="match status" value="1"/>
</dbReference>
<dbReference type="Pfam" id="PF13516">
    <property type="entry name" value="LRR_6"/>
    <property type="match status" value="1"/>
</dbReference>
<dbReference type="SMART" id="SM00367">
    <property type="entry name" value="LRR_CC"/>
    <property type="match status" value="4"/>
</dbReference>
<dbReference type="SUPFAM" id="SSF81383">
    <property type="entry name" value="F-box domain"/>
    <property type="match status" value="1"/>
</dbReference>
<dbReference type="SUPFAM" id="SSF52047">
    <property type="entry name" value="RNI-like"/>
    <property type="match status" value="1"/>
</dbReference>
<dbReference type="PROSITE" id="PS50181">
    <property type="entry name" value="FBOX"/>
    <property type="match status" value="1"/>
</dbReference>
<feature type="chain" id="PRO_0000283568" description="F-box protein At5g67140">
    <location>
        <begin position="1"/>
        <end position="228"/>
    </location>
</feature>
<feature type="domain" description="F-box" evidence="1">
    <location>
        <begin position="4"/>
        <end position="51"/>
    </location>
</feature>
<name>FB302_ARATH</name>
<proteinExistence type="evidence at transcript level"/>
<keyword id="KW-1185">Reference proteome</keyword>
<sequence>MDEEAAIDRLPLDLLAYIFSLATSFTVLAQASGVCKKWRKAVNQSMARRETLSFAGWKMDDDSTSRLVHLAFNLKELDISRSRWGCHITDNGLYQIASARCVSNLNSVSLWGMTAITDSGVVQLISRTSSLQHLNIGGTFITDESLFAIAERCHQLKTIGMWCCRHVTERGLLVLVNKCRKLESINLWGTRVPVDCFIALLTISPALQIKPMELLLNAQNPPPLLHAV</sequence>
<accession>Q9FH99</accession>
<evidence type="ECO:0000255" key="1">
    <source>
        <dbReference type="PROSITE-ProRule" id="PRU00080"/>
    </source>
</evidence>
<organism>
    <name type="scientific">Arabidopsis thaliana</name>
    <name type="common">Mouse-ear cress</name>
    <dbReference type="NCBI Taxonomy" id="3702"/>
    <lineage>
        <taxon>Eukaryota</taxon>
        <taxon>Viridiplantae</taxon>
        <taxon>Streptophyta</taxon>
        <taxon>Embryophyta</taxon>
        <taxon>Tracheophyta</taxon>
        <taxon>Spermatophyta</taxon>
        <taxon>Magnoliopsida</taxon>
        <taxon>eudicotyledons</taxon>
        <taxon>Gunneridae</taxon>
        <taxon>Pentapetalae</taxon>
        <taxon>rosids</taxon>
        <taxon>malvids</taxon>
        <taxon>Brassicales</taxon>
        <taxon>Brassicaceae</taxon>
        <taxon>Camelineae</taxon>
        <taxon>Arabidopsis</taxon>
    </lineage>
</organism>
<reference key="1">
    <citation type="journal article" date="2000" name="DNA Res.">
        <title>Structural analysis of Arabidopsis thaliana chromosome 5. X. Sequence features of the regions of 3,076,755 bp covered by sixty P1 and TAC clones.</title>
        <authorList>
            <person name="Sato S."/>
            <person name="Nakamura Y."/>
            <person name="Kaneko T."/>
            <person name="Katoh T."/>
            <person name="Asamizu E."/>
            <person name="Kotani H."/>
            <person name="Tabata S."/>
        </authorList>
    </citation>
    <scope>NUCLEOTIDE SEQUENCE [LARGE SCALE GENOMIC DNA]</scope>
    <source>
        <strain>cv. Columbia</strain>
    </source>
</reference>
<reference key="2">
    <citation type="journal article" date="2017" name="Plant J.">
        <title>Araport11: a complete reannotation of the Arabidopsis thaliana reference genome.</title>
        <authorList>
            <person name="Cheng C.Y."/>
            <person name="Krishnakumar V."/>
            <person name="Chan A.P."/>
            <person name="Thibaud-Nissen F."/>
            <person name="Schobel S."/>
            <person name="Town C.D."/>
        </authorList>
    </citation>
    <scope>GENOME REANNOTATION</scope>
    <source>
        <strain>cv. Columbia</strain>
    </source>
</reference>
<reference key="3">
    <citation type="journal article" date="2003" name="Science">
        <title>Empirical analysis of transcriptional activity in the Arabidopsis genome.</title>
        <authorList>
            <person name="Yamada K."/>
            <person name="Lim J."/>
            <person name="Dale J.M."/>
            <person name="Chen H."/>
            <person name="Shinn P."/>
            <person name="Palm C.J."/>
            <person name="Southwick A.M."/>
            <person name="Wu H.C."/>
            <person name="Kim C.J."/>
            <person name="Nguyen M."/>
            <person name="Pham P.K."/>
            <person name="Cheuk R.F."/>
            <person name="Karlin-Newmann G."/>
            <person name="Liu S.X."/>
            <person name="Lam B."/>
            <person name="Sakano H."/>
            <person name="Wu T."/>
            <person name="Yu G."/>
            <person name="Miranda M."/>
            <person name="Quach H.L."/>
            <person name="Tripp M."/>
            <person name="Chang C.H."/>
            <person name="Lee J.M."/>
            <person name="Toriumi M.J."/>
            <person name="Chan M.M."/>
            <person name="Tang C.C."/>
            <person name="Onodera C.S."/>
            <person name="Deng J.M."/>
            <person name="Akiyama K."/>
            <person name="Ansari Y."/>
            <person name="Arakawa T."/>
            <person name="Banh J."/>
            <person name="Banno F."/>
            <person name="Bowser L."/>
            <person name="Brooks S.Y."/>
            <person name="Carninci P."/>
            <person name="Chao Q."/>
            <person name="Choy N."/>
            <person name="Enju A."/>
            <person name="Goldsmith A.D."/>
            <person name="Gurjal M."/>
            <person name="Hansen N.F."/>
            <person name="Hayashizaki Y."/>
            <person name="Johnson-Hopson C."/>
            <person name="Hsuan V.W."/>
            <person name="Iida K."/>
            <person name="Karnes M."/>
            <person name="Khan S."/>
            <person name="Koesema E."/>
            <person name="Ishida J."/>
            <person name="Jiang P.X."/>
            <person name="Jones T."/>
            <person name="Kawai J."/>
            <person name="Kamiya A."/>
            <person name="Meyers C."/>
            <person name="Nakajima M."/>
            <person name="Narusaka M."/>
            <person name="Seki M."/>
            <person name="Sakurai T."/>
            <person name="Satou M."/>
            <person name="Tamse R."/>
            <person name="Vaysberg M."/>
            <person name="Wallender E.K."/>
            <person name="Wong C."/>
            <person name="Yamamura Y."/>
            <person name="Yuan S."/>
            <person name="Shinozaki K."/>
            <person name="Davis R.W."/>
            <person name="Theologis A."/>
            <person name="Ecker J.R."/>
        </authorList>
    </citation>
    <scope>NUCLEOTIDE SEQUENCE [LARGE SCALE MRNA]</scope>
    <source>
        <strain>cv. Columbia</strain>
    </source>
</reference>
<protein>
    <recommendedName>
        <fullName>F-box protein At5g67140</fullName>
    </recommendedName>
</protein>
<gene>
    <name type="ordered locus">At5g67140</name>
    <name type="ORF">K21H1.10</name>
</gene>